<sequence>MLLEQQKQLISLIQAAVAQCLPEAQAQVQLERPKVAAHGDIATNVAMQLAKPARRNPRELAQGIVDALMAQPQARELIQDAEIAGPGFINFRLTPAARQAVVQAVASQADAYGRAPRNGEKVLVEFVSANPTGPLHVGHARQAALGDAICRLYDASGWDVTREFYYNDAGNQIDNLAISVQARGRGIAPDAPDYPADGYKGDYIVEIARDFAARKSVQASDGQPVTATGDLDSLDDIRAFAVAYLRREQDLDLQAFGLAFDNYFLESSLYASGRVQETVDTLVAKGHTYEEGGALWLRTTELGTGDDKDRVMRKSEGGYTYFVPDVAYHKVKWERGFHHAVNIQGSDHHGTVARVRAGLQGLEAGIPKDFPAYVLHKMVKVMRGGEEVKISKRAGSYVTMRDLIDWVGRDAVRYFLIQRRADTEFVFDIDLALSKSDENPVYYIQYAHARICTMIGNSGASAAEIAQADTALLTAPSEYALLQRLAEFPQVVALAAQELAPHHVAFWLRDCASDFHAWYNAERVLVDEPALKLARLRLAATTRQVLANGLALLGVSAPDRM</sequence>
<organism>
    <name type="scientific">Bordetella bronchiseptica (strain ATCC BAA-588 / NCTC 13252 / RB50)</name>
    <name type="common">Alcaligenes bronchisepticus</name>
    <dbReference type="NCBI Taxonomy" id="257310"/>
    <lineage>
        <taxon>Bacteria</taxon>
        <taxon>Pseudomonadati</taxon>
        <taxon>Pseudomonadota</taxon>
        <taxon>Betaproteobacteria</taxon>
        <taxon>Burkholderiales</taxon>
        <taxon>Alcaligenaceae</taxon>
        <taxon>Bordetella</taxon>
    </lineage>
</organism>
<protein>
    <recommendedName>
        <fullName evidence="1">Arginine--tRNA ligase</fullName>
        <ecNumber evidence="1">6.1.1.19</ecNumber>
    </recommendedName>
    <alternativeName>
        <fullName evidence="1">Arginyl-tRNA synthetase</fullName>
        <shortName evidence="1">ArgRS</shortName>
    </alternativeName>
</protein>
<reference key="1">
    <citation type="journal article" date="2003" name="Nat. Genet.">
        <title>Comparative analysis of the genome sequences of Bordetella pertussis, Bordetella parapertussis and Bordetella bronchiseptica.</title>
        <authorList>
            <person name="Parkhill J."/>
            <person name="Sebaihia M."/>
            <person name="Preston A."/>
            <person name="Murphy L.D."/>
            <person name="Thomson N.R."/>
            <person name="Harris D.E."/>
            <person name="Holden M.T.G."/>
            <person name="Churcher C.M."/>
            <person name="Bentley S.D."/>
            <person name="Mungall K.L."/>
            <person name="Cerdeno-Tarraga A.-M."/>
            <person name="Temple L."/>
            <person name="James K.D."/>
            <person name="Harris B."/>
            <person name="Quail M.A."/>
            <person name="Achtman M."/>
            <person name="Atkin R."/>
            <person name="Baker S."/>
            <person name="Basham D."/>
            <person name="Bason N."/>
            <person name="Cherevach I."/>
            <person name="Chillingworth T."/>
            <person name="Collins M."/>
            <person name="Cronin A."/>
            <person name="Davis P."/>
            <person name="Doggett J."/>
            <person name="Feltwell T."/>
            <person name="Goble A."/>
            <person name="Hamlin N."/>
            <person name="Hauser H."/>
            <person name="Holroyd S."/>
            <person name="Jagels K."/>
            <person name="Leather S."/>
            <person name="Moule S."/>
            <person name="Norberczak H."/>
            <person name="O'Neil S."/>
            <person name="Ormond D."/>
            <person name="Price C."/>
            <person name="Rabbinowitsch E."/>
            <person name="Rutter S."/>
            <person name="Sanders M."/>
            <person name="Saunders D."/>
            <person name="Seeger K."/>
            <person name="Sharp S."/>
            <person name="Simmonds M."/>
            <person name="Skelton J."/>
            <person name="Squares R."/>
            <person name="Squares S."/>
            <person name="Stevens K."/>
            <person name="Unwin L."/>
            <person name="Whitehead S."/>
            <person name="Barrell B.G."/>
            <person name="Maskell D.J."/>
        </authorList>
    </citation>
    <scope>NUCLEOTIDE SEQUENCE [LARGE SCALE GENOMIC DNA]</scope>
    <source>
        <strain>ATCC BAA-588 / NCTC 13252 / RB50</strain>
    </source>
</reference>
<evidence type="ECO:0000255" key="1">
    <source>
        <dbReference type="HAMAP-Rule" id="MF_00123"/>
    </source>
</evidence>
<keyword id="KW-0030">Aminoacyl-tRNA synthetase</keyword>
<keyword id="KW-0067">ATP-binding</keyword>
<keyword id="KW-0963">Cytoplasm</keyword>
<keyword id="KW-0436">Ligase</keyword>
<keyword id="KW-0547">Nucleotide-binding</keyword>
<keyword id="KW-0648">Protein biosynthesis</keyword>
<accession>Q7WDQ0</accession>
<comment type="catalytic activity">
    <reaction evidence="1">
        <text>tRNA(Arg) + L-arginine + ATP = L-arginyl-tRNA(Arg) + AMP + diphosphate</text>
        <dbReference type="Rhea" id="RHEA:20301"/>
        <dbReference type="Rhea" id="RHEA-COMP:9658"/>
        <dbReference type="Rhea" id="RHEA-COMP:9673"/>
        <dbReference type="ChEBI" id="CHEBI:30616"/>
        <dbReference type="ChEBI" id="CHEBI:32682"/>
        <dbReference type="ChEBI" id="CHEBI:33019"/>
        <dbReference type="ChEBI" id="CHEBI:78442"/>
        <dbReference type="ChEBI" id="CHEBI:78513"/>
        <dbReference type="ChEBI" id="CHEBI:456215"/>
        <dbReference type="EC" id="6.1.1.19"/>
    </reaction>
</comment>
<comment type="subunit">
    <text evidence="1">Monomer.</text>
</comment>
<comment type="subcellular location">
    <subcellularLocation>
        <location evidence="1">Cytoplasm</location>
    </subcellularLocation>
</comment>
<comment type="similarity">
    <text evidence="1">Belongs to the class-I aminoacyl-tRNA synthetase family.</text>
</comment>
<name>SYR_BORBR</name>
<gene>
    <name evidence="1" type="primary">argS</name>
    <name type="ordered locus">BB4938</name>
</gene>
<dbReference type="EC" id="6.1.1.19" evidence="1"/>
<dbReference type="EMBL" id="BX640452">
    <property type="protein sequence ID" value="CAE35302.1"/>
    <property type="molecule type" value="Genomic_DNA"/>
</dbReference>
<dbReference type="RefSeq" id="WP_003815935.1">
    <property type="nucleotide sequence ID" value="NC_002927.3"/>
</dbReference>
<dbReference type="SMR" id="Q7WDQ0"/>
<dbReference type="GeneID" id="56476561"/>
<dbReference type="KEGG" id="bbr:BB4938"/>
<dbReference type="eggNOG" id="COG0018">
    <property type="taxonomic scope" value="Bacteria"/>
</dbReference>
<dbReference type="HOGENOM" id="CLU_006406_0_1_4"/>
<dbReference type="Proteomes" id="UP000001027">
    <property type="component" value="Chromosome"/>
</dbReference>
<dbReference type="GO" id="GO:0005737">
    <property type="term" value="C:cytoplasm"/>
    <property type="evidence" value="ECO:0007669"/>
    <property type="project" value="UniProtKB-SubCell"/>
</dbReference>
<dbReference type="GO" id="GO:0004814">
    <property type="term" value="F:arginine-tRNA ligase activity"/>
    <property type="evidence" value="ECO:0007669"/>
    <property type="project" value="UniProtKB-UniRule"/>
</dbReference>
<dbReference type="GO" id="GO:0005524">
    <property type="term" value="F:ATP binding"/>
    <property type="evidence" value="ECO:0007669"/>
    <property type="project" value="UniProtKB-UniRule"/>
</dbReference>
<dbReference type="GO" id="GO:0006420">
    <property type="term" value="P:arginyl-tRNA aminoacylation"/>
    <property type="evidence" value="ECO:0007669"/>
    <property type="project" value="UniProtKB-UniRule"/>
</dbReference>
<dbReference type="CDD" id="cd07956">
    <property type="entry name" value="Anticodon_Ia_Arg"/>
    <property type="match status" value="1"/>
</dbReference>
<dbReference type="CDD" id="cd00671">
    <property type="entry name" value="ArgRS_core"/>
    <property type="match status" value="1"/>
</dbReference>
<dbReference type="FunFam" id="1.10.730.10:FF:000008">
    <property type="entry name" value="Arginine--tRNA ligase"/>
    <property type="match status" value="1"/>
</dbReference>
<dbReference type="FunFam" id="3.40.50.620:FF:000062">
    <property type="entry name" value="Arginine--tRNA ligase"/>
    <property type="match status" value="1"/>
</dbReference>
<dbReference type="Gene3D" id="3.30.1360.70">
    <property type="entry name" value="Arginyl tRNA synthetase N-terminal domain"/>
    <property type="match status" value="1"/>
</dbReference>
<dbReference type="Gene3D" id="3.40.50.620">
    <property type="entry name" value="HUPs"/>
    <property type="match status" value="1"/>
</dbReference>
<dbReference type="Gene3D" id="1.10.730.10">
    <property type="entry name" value="Isoleucyl-tRNA Synthetase, Domain 1"/>
    <property type="match status" value="1"/>
</dbReference>
<dbReference type="HAMAP" id="MF_00123">
    <property type="entry name" value="Arg_tRNA_synth"/>
    <property type="match status" value="1"/>
</dbReference>
<dbReference type="InterPro" id="IPR001412">
    <property type="entry name" value="aa-tRNA-synth_I_CS"/>
</dbReference>
<dbReference type="InterPro" id="IPR001278">
    <property type="entry name" value="Arg-tRNA-ligase"/>
</dbReference>
<dbReference type="InterPro" id="IPR005148">
    <property type="entry name" value="Arg-tRNA-synth_N"/>
</dbReference>
<dbReference type="InterPro" id="IPR036695">
    <property type="entry name" value="Arg-tRNA-synth_N_sf"/>
</dbReference>
<dbReference type="InterPro" id="IPR035684">
    <property type="entry name" value="ArgRS_core"/>
</dbReference>
<dbReference type="InterPro" id="IPR008909">
    <property type="entry name" value="DALR_anticod-bd"/>
</dbReference>
<dbReference type="InterPro" id="IPR014729">
    <property type="entry name" value="Rossmann-like_a/b/a_fold"/>
</dbReference>
<dbReference type="InterPro" id="IPR009080">
    <property type="entry name" value="tRNAsynth_Ia_anticodon-bd"/>
</dbReference>
<dbReference type="NCBIfam" id="TIGR00456">
    <property type="entry name" value="argS"/>
    <property type="match status" value="1"/>
</dbReference>
<dbReference type="PANTHER" id="PTHR11956:SF5">
    <property type="entry name" value="ARGININE--TRNA LIGASE, CYTOPLASMIC"/>
    <property type="match status" value="1"/>
</dbReference>
<dbReference type="PANTHER" id="PTHR11956">
    <property type="entry name" value="ARGINYL-TRNA SYNTHETASE"/>
    <property type="match status" value="1"/>
</dbReference>
<dbReference type="Pfam" id="PF03485">
    <property type="entry name" value="Arg_tRNA_synt_N"/>
    <property type="match status" value="1"/>
</dbReference>
<dbReference type="Pfam" id="PF05746">
    <property type="entry name" value="DALR_1"/>
    <property type="match status" value="1"/>
</dbReference>
<dbReference type="Pfam" id="PF00750">
    <property type="entry name" value="tRNA-synt_1d"/>
    <property type="match status" value="1"/>
</dbReference>
<dbReference type="PRINTS" id="PR01038">
    <property type="entry name" value="TRNASYNTHARG"/>
</dbReference>
<dbReference type="SMART" id="SM01016">
    <property type="entry name" value="Arg_tRNA_synt_N"/>
    <property type="match status" value="1"/>
</dbReference>
<dbReference type="SMART" id="SM00836">
    <property type="entry name" value="DALR_1"/>
    <property type="match status" value="1"/>
</dbReference>
<dbReference type="SUPFAM" id="SSF47323">
    <property type="entry name" value="Anticodon-binding domain of a subclass of class I aminoacyl-tRNA synthetases"/>
    <property type="match status" value="1"/>
</dbReference>
<dbReference type="SUPFAM" id="SSF55190">
    <property type="entry name" value="Arginyl-tRNA synthetase (ArgRS), N-terminal 'additional' domain"/>
    <property type="match status" value="1"/>
</dbReference>
<dbReference type="SUPFAM" id="SSF52374">
    <property type="entry name" value="Nucleotidylyl transferase"/>
    <property type="match status" value="1"/>
</dbReference>
<dbReference type="PROSITE" id="PS00178">
    <property type="entry name" value="AA_TRNA_LIGASE_I"/>
    <property type="match status" value="1"/>
</dbReference>
<proteinExistence type="inferred from homology"/>
<feature type="chain" id="PRO_0000151533" description="Arginine--tRNA ligase">
    <location>
        <begin position="1"/>
        <end position="561"/>
    </location>
</feature>
<feature type="short sequence motif" description="'HIGH' region">
    <location>
        <begin position="129"/>
        <end position="139"/>
    </location>
</feature>